<dbReference type="EC" id="2.4.2.1" evidence="2"/>
<dbReference type="EMBL" id="CP000721">
    <property type="protein sequence ID" value="ABR36252.1"/>
    <property type="molecule type" value="Genomic_DNA"/>
</dbReference>
<dbReference type="RefSeq" id="WP_012060299.1">
    <property type="nucleotide sequence ID" value="NC_009617.1"/>
</dbReference>
<dbReference type="SMR" id="A6M0X2"/>
<dbReference type="GeneID" id="66347003"/>
<dbReference type="KEGG" id="cbe:Cbei_4142"/>
<dbReference type="eggNOG" id="COG0813">
    <property type="taxonomic scope" value="Bacteria"/>
</dbReference>
<dbReference type="HOGENOM" id="CLU_068457_2_0_9"/>
<dbReference type="Proteomes" id="UP000000565">
    <property type="component" value="Chromosome"/>
</dbReference>
<dbReference type="GO" id="GO:0005829">
    <property type="term" value="C:cytosol"/>
    <property type="evidence" value="ECO:0007669"/>
    <property type="project" value="TreeGrafter"/>
</dbReference>
<dbReference type="GO" id="GO:0004731">
    <property type="term" value="F:purine-nucleoside phosphorylase activity"/>
    <property type="evidence" value="ECO:0007669"/>
    <property type="project" value="UniProtKB-UniRule"/>
</dbReference>
<dbReference type="GO" id="GO:0006152">
    <property type="term" value="P:purine nucleoside catabolic process"/>
    <property type="evidence" value="ECO:0007669"/>
    <property type="project" value="TreeGrafter"/>
</dbReference>
<dbReference type="CDD" id="cd09006">
    <property type="entry name" value="PNP_EcPNPI-like"/>
    <property type="match status" value="1"/>
</dbReference>
<dbReference type="Gene3D" id="3.40.50.1580">
    <property type="entry name" value="Nucleoside phosphorylase domain"/>
    <property type="match status" value="1"/>
</dbReference>
<dbReference type="HAMAP" id="MF_01627">
    <property type="entry name" value="Pur_nucleosid_phosp"/>
    <property type="match status" value="1"/>
</dbReference>
<dbReference type="InterPro" id="IPR004402">
    <property type="entry name" value="DeoD-type"/>
</dbReference>
<dbReference type="InterPro" id="IPR018016">
    <property type="entry name" value="Nucleoside_phosphorylase_CS"/>
</dbReference>
<dbReference type="InterPro" id="IPR000845">
    <property type="entry name" value="Nucleoside_phosphorylase_d"/>
</dbReference>
<dbReference type="InterPro" id="IPR035994">
    <property type="entry name" value="Nucleoside_phosphorylase_sf"/>
</dbReference>
<dbReference type="NCBIfam" id="TIGR00107">
    <property type="entry name" value="deoD"/>
    <property type="match status" value="1"/>
</dbReference>
<dbReference type="NCBIfam" id="NF004489">
    <property type="entry name" value="PRK05819.1"/>
    <property type="match status" value="1"/>
</dbReference>
<dbReference type="PANTHER" id="PTHR43691:SF11">
    <property type="entry name" value="FI09636P-RELATED"/>
    <property type="match status" value="1"/>
</dbReference>
<dbReference type="PANTHER" id="PTHR43691">
    <property type="entry name" value="URIDINE PHOSPHORYLASE"/>
    <property type="match status" value="1"/>
</dbReference>
<dbReference type="Pfam" id="PF01048">
    <property type="entry name" value="PNP_UDP_1"/>
    <property type="match status" value="1"/>
</dbReference>
<dbReference type="SUPFAM" id="SSF53167">
    <property type="entry name" value="Purine and uridine phosphorylases"/>
    <property type="match status" value="1"/>
</dbReference>
<dbReference type="PROSITE" id="PS01232">
    <property type="entry name" value="PNP_UDP_1"/>
    <property type="match status" value="1"/>
</dbReference>
<organism>
    <name type="scientific">Clostridium beijerinckii (strain ATCC 51743 / NCIMB 8052)</name>
    <name type="common">Clostridium acetobutylicum</name>
    <dbReference type="NCBI Taxonomy" id="290402"/>
    <lineage>
        <taxon>Bacteria</taxon>
        <taxon>Bacillati</taxon>
        <taxon>Bacillota</taxon>
        <taxon>Clostridia</taxon>
        <taxon>Eubacteriales</taxon>
        <taxon>Clostridiaceae</taxon>
        <taxon>Clostridium</taxon>
    </lineage>
</organism>
<name>DEOD_CLOB8</name>
<sequence length="237" mass="25802">MSVHINAPEGAIAESVLLPGDPLRAKFIAENFLEDVVCYNEVRGMYGFTGTYKGKKISVQGTGMGIPSISIYANELIQSYGVKNLIRVGTCGGYSEKVKVRDLIIAMSASTDSNLNLVRFQGRTFAPTASFELLKPAYDIAVEKGFDPKVGSIYSSDVFYGDDDEDWKKWAKFGCLGVEMEAAALYTIAAKFGVNALALLTVSDHFVTGEVTSAEERQLTFTNMMEVALDTIAKIEN</sequence>
<gene>
    <name evidence="2" type="primary">deoD</name>
    <name type="ordered locus">Cbei_4142</name>
</gene>
<evidence type="ECO:0000250" key="1">
    <source>
        <dbReference type="UniProtKB" id="P50389"/>
    </source>
</evidence>
<evidence type="ECO:0000255" key="2">
    <source>
        <dbReference type="HAMAP-Rule" id="MF_01627"/>
    </source>
</evidence>
<proteinExistence type="inferred from homology"/>
<keyword id="KW-0328">Glycosyltransferase</keyword>
<keyword id="KW-0808">Transferase</keyword>
<comment type="function">
    <text evidence="2">Catalyzes the reversible phosphorolytic breakdown of the N-glycosidic bond in the beta-(deoxy)ribonucleoside molecules, with the formation of the corresponding free purine bases and pentose-1-phosphate.</text>
</comment>
<comment type="catalytic activity">
    <reaction evidence="2">
        <text>a purine D-ribonucleoside + phosphate = a purine nucleobase + alpha-D-ribose 1-phosphate</text>
        <dbReference type="Rhea" id="RHEA:19805"/>
        <dbReference type="ChEBI" id="CHEBI:26386"/>
        <dbReference type="ChEBI" id="CHEBI:43474"/>
        <dbReference type="ChEBI" id="CHEBI:57720"/>
        <dbReference type="ChEBI" id="CHEBI:142355"/>
        <dbReference type="EC" id="2.4.2.1"/>
    </reaction>
</comment>
<comment type="catalytic activity">
    <reaction evidence="2">
        <text>a purine 2'-deoxy-D-ribonucleoside + phosphate = a purine nucleobase + 2-deoxy-alpha-D-ribose 1-phosphate</text>
        <dbReference type="Rhea" id="RHEA:36431"/>
        <dbReference type="ChEBI" id="CHEBI:26386"/>
        <dbReference type="ChEBI" id="CHEBI:43474"/>
        <dbReference type="ChEBI" id="CHEBI:57259"/>
        <dbReference type="ChEBI" id="CHEBI:142361"/>
        <dbReference type="EC" id="2.4.2.1"/>
    </reaction>
</comment>
<comment type="subunit">
    <text evidence="2">Homohexamer; trimer of homodimers.</text>
</comment>
<comment type="similarity">
    <text evidence="2">Belongs to the PNP/UDP phosphorylase family.</text>
</comment>
<reference key="1">
    <citation type="submission" date="2007-06" db="EMBL/GenBank/DDBJ databases">
        <title>Complete sequence of Clostridium beijerinckii NCIMB 8052.</title>
        <authorList>
            <consortium name="US DOE Joint Genome Institute"/>
            <person name="Copeland A."/>
            <person name="Lucas S."/>
            <person name="Lapidus A."/>
            <person name="Barry K."/>
            <person name="Detter J.C."/>
            <person name="Glavina del Rio T."/>
            <person name="Hammon N."/>
            <person name="Israni S."/>
            <person name="Dalin E."/>
            <person name="Tice H."/>
            <person name="Pitluck S."/>
            <person name="Sims D."/>
            <person name="Brettin T."/>
            <person name="Bruce D."/>
            <person name="Tapia R."/>
            <person name="Brainard J."/>
            <person name="Schmutz J."/>
            <person name="Larimer F."/>
            <person name="Land M."/>
            <person name="Hauser L."/>
            <person name="Kyrpides N."/>
            <person name="Mikhailova N."/>
            <person name="Bennet G."/>
            <person name="Cann I."/>
            <person name="Chen J.-S."/>
            <person name="Contreras A.L."/>
            <person name="Jones D."/>
            <person name="Kashket E."/>
            <person name="Mitchell W."/>
            <person name="Stoddard S."/>
            <person name="Schwarz W."/>
            <person name="Qureshi N."/>
            <person name="Young M."/>
            <person name="Shi Z."/>
            <person name="Ezeji T."/>
            <person name="White B."/>
            <person name="Blaschek H."/>
            <person name="Richardson P."/>
        </authorList>
    </citation>
    <scope>NUCLEOTIDE SEQUENCE [LARGE SCALE GENOMIC DNA]</scope>
    <source>
        <strain>ATCC 51743 / NCIMB 8052</strain>
    </source>
</reference>
<accession>A6M0X2</accession>
<feature type="chain" id="PRO_0000335596" description="Purine nucleoside phosphorylase DeoD-type">
    <location>
        <begin position="1"/>
        <end position="237"/>
    </location>
</feature>
<feature type="active site" description="Proton donor" evidence="2">
    <location>
        <position position="204"/>
    </location>
</feature>
<feature type="binding site" evidence="1">
    <location>
        <position position="4"/>
    </location>
    <ligand>
        <name>a purine D-ribonucleoside</name>
        <dbReference type="ChEBI" id="CHEBI:142355"/>
        <note>ligand shared between dimeric partners</note>
    </ligand>
</feature>
<feature type="binding site" description="in other chain" evidence="1">
    <location>
        <position position="20"/>
    </location>
    <ligand>
        <name>phosphate</name>
        <dbReference type="ChEBI" id="CHEBI:43474"/>
        <note>ligand shared between dimeric partners</note>
    </ligand>
</feature>
<feature type="binding site" description="in other chain" evidence="1">
    <location>
        <position position="24"/>
    </location>
    <ligand>
        <name>phosphate</name>
        <dbReference type="ChEBI" id="CHEBI:43474"/>
        <note>ligand shared between dimeric partners</note>
    </ligand>
</feature>
<feature type="binding site" evidence="1">
    <location>
        <position position="43"/>
    </location>
    <ligand>
        <name>phosphate</name>
        <dbReference type="ChEBI" id="CHEBI:43474"/>
        <note>ligand shared between dimeric partners</note>
    </ligand>
</feature>
<feature type="binding site" description="in other chain" evidence="1">
    <location>
        <begin position="87"/>
        <end position="90"/>
    </location>
    <ligand>
        <name>phosphate</name>
        <dbReference type="ChEBI" id="CHEBI:43474"/>
        <note>ligand shared between dimeric partners</note>
    </ligand>
</feature>
<feature type="binding site" description="in other chain" evidence="1">
    <location>
        <begin position="179"/>
        <end position="181"/>
    </location>
    <ligand>
        <name>a purine D-ribonucleoside</name>
        <dbReference type="ChEBI" id="CHEBI:142355"/>
        <note>ligand shared between dimeric partners</note>
    </ligand>
</feature>
<feature type="binding site" description="in other chain" evidence="1">
    <location>
        <begin position="203"/>
        <end position="204"/>
    </location>
    <ligand>
        <name>a purine D-ribonucleoside</name>
        <dbReference type="ChEBI" id="CHEBI:142355"/>
        <note>ligand shared between dimeric partners</note>
    </ligand>
</feature>
<feature type="site" description="Important for catalytic activity" evidence="2">
    <location>
        <position position="217"/>
    </location>
</feature>
<protein>
    <recommendedName>
        <fullName evidence="2">Purine nucleoside phosphorylase DeoD-type</fullName>
        <shortName evidence="2">PNP</shortName>
        <ecNumber evidence="2">2.4.2.1</ecNumber>
    </recommendedName>
</protein>